<comment type="function">
    <text evidence="1">Catalyzes the last two sequential reactions in the de novo biosynthetic pathway for UDP-N-acetylglucosamine (UDP-GlcNAc). The C-terminal domain catalyzes the transfer of acetyl group from acetyl coenzyme A to glucosamine-1-phosphate (GlcN-1-P) to produce N-acetylglucosamine-1-phosphate (GlcNAc-1-P), which is converted into UDP-GlcNAc by the transfer of uridine 5-monophosphate (from uridine 5-triphosphate), a reaction catalyzed by the N-terminal domain.</text>
</comment>
<comment type="catalytic activity">
    <reaction evidence="1">
        <text>alpha-D-glucosamine 1-phosphate + acetyl-CoA = N-acetyl-alpha-D-glucosamine 1-phosphate + CoA + H(+)</text>
        <dbReference type="Rhea" id="RHEA:13725"/>
        <dbReference type="ChEBI" id="CHEBI:15378"/>
        <dbReference type="ChEBI" id="CHEBI:57287"/>
        <dbReference type="ChEBI" id="CHEBI:57288"/>
        <dbReference type="ChEBI" id="CHEBI:57776"/>
        <dbReference type="ChEBI" id="CHEBI:58516"/>
        <dbReference type="EC" id="2.3.1.157"/>
    </reaction>
</comment>
<comment type="catalytic activity">
    <reaction evidence="1">
        <text>N-acetyl-alpha-D-glucosamine 1-phosphate + UTP + H(+) = UDP-N-acetyl-alpha-D-glucosamine + diphosphate</text>
        <dbReference type="Rhea" id="RHEA:13509"/>
        <dbReference type="ChEBI" id="CHEBI:15378"/>
        <dbReference type="ChEBI" id="CHEBI:33019"/>
        <dbReference type="ChEBI" id="CHEBI:46398"/>
        <dbReference type="ChEBI" id="CHEBI:57705"/>
        <dbReference type="ChEBI" id="CHEBI:57776"/>
        <dbReference type="EC" id="2.7.7.23"/>
    </reaction>
</comment>
<comment type="cofactor">
    <cofactor evidence="1">
        <name>Mg(2+)</name>
        <dbReference type="ChEBI" id="CHEBI:18420"/>
    </cofactor>
    <text evidence="1">Binds 1 Mg(2+) ion per subunit.</text>
</comment>
<comment type="pathway">
    <text evidence="1">Nucleotide-sugar biosynthesis; UDP-N-acetyl-alpha-D-glucosamine biosynthesis; N-acetyl-alpha-D-glucosamine 1-phosphate from alpha-D-glucosamine 6-phosphate (route II): step 2/2.</text>
</comment>
<comment type="pathway">
    <text evidence="1">Nucleotide-sugar biosynthesis; UDP-N-acetyl-alpha-D-glucosamine biosynthesis; UDP-N-acetyl-alpha-D-glucosamine from N-acetyl-alpha-D-glucosamine 1-phosphate: step 1/1.</text>
</comment>
<comment type="pathway">
    <text evidence="1">Bacterial outer membrane biogenesis; LPS lipid A biosynthesis.</text>
</comment>
<comment type="subunit">
    <text evidence="1">Homotrimer.</text>
</comment>
<comment type="subcellular location">
    <subcellularLocation>
        <location evidence="1">Cytoplasm</location>
    </subcellularLocation>
</comment>
<comment type="similarity">
    <text evidence="1">In the N-terminal section; belongs to the N-acetylglucosamine-1-phosphate uridyltransferase family.</text>
</comment>
<comment type="similarity">
    <text evidence="1">In the C-terminal section; belongs to the transferase hexapeptide repeat family.</text>
</comment>
<protein>
    <recommendedName>
        <fullName evidence="1">Bifunctional protein GlmU</fullName>
    </recommendedName>
    <domain>
        <recommendedName>
            <fullName evidence="1">UDP-N-acetylglucosamine pyrophosphorylase</fullName>
            <ecNumber evidence="1">2.7.7.23</ecNumber>
        </recommendedName>
        <alternativeName>
            <fullName evidence="1">N-acetylglucosamine-1-phosphate uridyltransferase</fullName>
        </alternativeName>
    </domain>
    <domain>
        <recommendedName>
            <fullName evidence="1">Glucosamine-1-phosphate N-acetyltransferase</fullName>
            <ecNumber evidence="1">2.3.1.157</ecNumber>
        </recommendedName>
    </domain>
</protein>
<organism>
    <name type="scientific">Bacillus anthracis (strain A0248)</name>
    <dbReference type="NCBI Taxonomy" id="592021"/>
    <lineage>
        <taxon>Bacteria</taxon>
        <taxon>Bacillati</taxon>
        <taxon>Bacillota</taxon>
        <taxon>Bacilli</taxon>
        <taxon>Bacillales</taxon>
        <taxon>Bacillaceae</taxon>
        <taxon>Bacillus</taxon>
        <taxon>Bacillus cereus group</taxon>
    </lineage>
</organism>
<reference key="1">
    <citation type="submission" date="2009-04" db="EMBL/GenBank/DDBJ databases">
        <title>Genome sequence of Bacillus anthracis A0248.</title>
        <authorList>
            <person name="Dodson R.J."/>
            <person name="Munk A.C."/>
            <person name="Bruce D."/>
            <person name="Detter C."/>
            <person name="Tapia R."/>
            <person name="Sutton G."/>
            <person name="Sims D."/>
            <person name="Brettin T."/>
        </authorList>
    </citation>
    <scope>NUCLEOTIDE SEQUENCE [LARGE SCALE GENOMIC DNA]</scope>
    <source>
        <strain>A0248</strain>
    </source>
</reference>
<feature type="chain" id="PRO_1000186396" description="Bifunctional protein GlmU">
    <location>
        <begin position="1"/>
        <end position="459"/>
    </location>
</feature>
<feature type="region of interest" description="Pyrophosphorylase" evidence="1">
    <location>
        <begin position="1"/>
        <end position="230"/>
    </location>
</feature>
<feature type="region of interest" description="Linker" evidence="1">
    <location>
        <begin position="231"/>
        <end position="251"/>
    </location>
</feature>
<feature type="region of interest" description="N-acetyltransferase" evidence="1">
    <location>
        <begin position="252"/>
        <end position="459"/>
    </location>
</feature>
<feature type="active site" description="Proton acceptor" evidence="1">
    <location>
        <position position="363"/>
    </location>
</feature>
<feature type="binding site" evidence="1">
    <location>
        <begin position="9"/>
        <end position="12"/>
    </location>
    <ligand>
        <name>UDP-N-acetyl-alpha-D-glucosamine</name>
        <dbReference type="ChEBI" id="CHEBI:57705"/>
    </ligand>
</feature>
<feature type="binding site" evidence="1">
    <location>
        <position position="23"/>
    </location>
    <ligand>
        <name>UDP-N-acetyl-alpha-D-glucosamine</name>
        <dbReference type="ChEBI" id="CHEBI:57705"/>
    </ligand>
</feature>
<feature type="binding site" evidence="1">
    <location>
        <position position="73"/>
    </location>
    <ligand>
        <name>UDP-N-acetyl-alpha-D-glucosamine</name>
        <dbReference type="ChEBI" id="CHEBI:57705"/>
    </ligand>
</feature>
<feature type="binding site" evidence="1">
    <location>
        <begin position="78"/>
        <end position="79"/>
    </location>
    <ligand>
        <name>UDP-N-acetyl-alpha-D-glucosamine</name>
        <dbReference type="ChEBI" id="CHEBI:57705"/>
    </ligand>
</feature>
<feature type="binding site" evidence="1">
    <location>
        <position position="103"/>
    </location>
    <ligand>
        <name>Mg(2+)</name>
        <dbReference type="ChEBI" id="CHEBI:18420"/>
    </ligand>
</feature>
<feature type="binding site" evidence="1">
    <location>
        <position position="140"/>
    </location>
    <ligand>
        <name>UDP-N-acetyl-alpha-D-glucosamine</name>
        <dbReference type="ChEBI" id="CHEBI:57705"/>
    </ligand>
</feature>
<feature type="binding site" evidence="1">
    <location>
        <position position="155"/>
    </location>
    <ligand>
        <name>UDP-N-acetyl-alpha-D-glucosamine</name>
        <dbReference type="ChEBI" id="CHEBI:57705"/>
    </ligand>
</feature>
<feature type="binding site" evidence="1">
    <location>
        <position position="170"/>
    </location>
    <ligand>
        <name>UDP-N-acetyl-alpha-D-glucosamine</name>
        <dbReference type="ChEBI" id="CHEBI:57705"/>
    </ligand>
</feature>
<feature type="binding site" evidence="1">
    <location>
        <position position="228"/>
    </location>
    <ligand>
        <name>Mg(2+)</name>
        <dbReference type="ChEBI" id="CHEBI:18420"/>
    </ligand>
</feature>
<feature type="binding site" evidence="1">
    <location>
        <position position="228"/>
    </location>
    <ligand>
        <name>UDP-N-acetyl-alpha-D-glucosamine</name>
        <dbReference type="ChEBI" id="CHEBI:57705"/>
    </ligand>
</feature>
<feature type="binding site" evidence="1">
    <location>
        <position position="333"/>
    </location>
    <ligand>
        <name>UDP-N-acetyl-alpha-D-glucosamine</name>
        <dbReference type="ChEBI" id="CHEBI:57705"/>
    </ligand>
</feature>
<feature type="binding site" evidence="1">
    <location>
        <position position="351"/>
    </location>
    <ligand>
        <name>UDP-N-acetyl-alpha-D-glucosamine</name>
        <dbReference type="ChEBI" id="CHEBI:57705"/>
    </ligand>
</feature>
<feature type="binding site" evidence="1">
    <location>
        <position position="366"/>
    </location>
    <ligand>
        <name>UDP-N-acetyl-alpha-D-glucosamine</name>
        <dbReference type="ChEBI" id="CHEBI:57705"/>
    </ligand>
</feature>
<feature type="binding site" evidence="1">
    <location>
        <position position="377"/>
    </location>
    <ligand>
        <name>UDP-N-acetyl-alpha-D-glucosamine</name>
        <dbReference type="ChEBI" id="CHEBI:57705"/>
    </ligand>
</feature>
<feature type="binding site" evidence="1">
    <location>
        <begin position="386"/>
        <end position="387"/>
    </location>
    <ligand>
        <name>acetyl-CoA</name>
        <dbReference type="ChEBI" id="CHEBI:57288"/>
    </ligand>
</feature>
<feature type="binding site" evidence="1">
    <location>
        <position position="423"/>
    </location>
    <ligand>
        <name>acetyl-CoA</name>
        <dbReference type="ChEBI" id="CHEBI:57288"/>
    </ligand>
</feature>
<feature type="binding site" evidence="1">
    <location>
        <position position="440"/>
    </location>
    <ligand>
        <name>acetyl-CoA</name>
        <dbReference type="ChEBI" id="CHEBI:57288"/>
    </ligand>
</feature>
<proteinExistence type="inferred from homology"/>
<evidence type="ECO:0000255" key="1">
    <source>
        <dbReference type="HAMAP-Rule" id="MF_01631"/>
    </source>
</evidence>
<accession>C3P9J5</accession>
<sequence length="459" mass="49423">MSNRFAVILAAGKGTRMKSKLYKVLHPVCGKPMVQHVVDQVSQLGLQKLVTVVGHGAEMVQEQLGNVSEFALQAEQLGTAHAVDQAAGVLANEEGTTLVICGDTPLITAETMEALLQQHKEAGAMATVLTAYIEEPAGYGRIVRNENGHVEKIVEHKDANEKELAIKEINTGTYCFDNKALFASLSKVSNDNVQGEYYLPDVIEILKNEGHIVSAYQTEHFDETLGVNDRVALSQAEIIMKNRINRKNMVNGVTIIDPSNTYISADAIIGSDTVLHPGTIIEGNTVIGSDCEIGPHTVIRDSEIGDRTTIRQSTVHDSKLGTEVSVGPFAHIRPDSVIGDEVRVGNFVEIKKTVFGNRSKASHLSYIGDAQVGEDVNLGCGSITVNYDGKNKFKTVIGNGVFIGCNSNLVAPVTVEDGAYVAAGSTITENVPSKALSVARARQVNKEDYVDQLLNKKKS</sequence>
<dbReference type="EC" id="2.7.7.23" evidence="1"/>
<dbReference type="EC" id="2.3.1.157" evidence="1"/>
<dbReference type="EMBL" id="CP001598">
    <property type="protein sequence ID" value="ACQ50133.1"/>
    <property type="molecule type" value="Genomic_DNA"/>
</dbReference>
<dbReference type="RefSeq" id="WP_000071032.1">
    <property type="nucleotide sequence ID" value="NC_012659.1"/>
</dbReference>
<dbReference type="SMR" id="C3P9J5"/>
<dbReference type="GeneID" id="45020089"/>
<dbReference type="KEGG" id="bai:BAA_0059"/>
<dbReference type="HOGENOM" id="CLU_029499_15_2_9"/>
<dbReference type="UniPathway" id="UPA00113">
    <property type="reaction ID" value="UER00532"/>
</dbReference>
<dbReference type="UniPathway" id="UPA00113">
    <property type="reaction ID" value="UER00533"/>
</dbReference>
<dbReference type="UniPathway" id="UPA00973"/>
<dbReference type="GO" id="GO:0005737">
    <property type="term" value="C:cytoplasm"/>
    <property type="evidence" value="ECO:0007669"/>
    <property type="project" value="UniProtKB-SubCell"/>
</dbReference>
<dbReference type="GO" id="GO:0016020">
    <property type="term" value="C:membrane"/>
    <property type="evidence" value="ECO:0007669"/>
    <property type="project" value="GOC"/>
</dbReference>
<dbReference type="GO" id="GO:0019134">
    <property type="term" value="F:glucosamine-1-phosphate N-acetyltransferase activity"/>
    <property type="evidence" value="ECO:0007669"/>
    <property type="project" value="UniProtKB-UniRule"/>
</dbReference>
<dbReference type="GO" id="GO:0000287">
    <property type="term" value="F:magnesium ion binding"/>
    <property type="evidence" value="ECO:0007669"/>
    <property type="project" value="UniProtKB-UniRule"/>
</dbReference>
<dbReference type="GO" id="GO:0003977">
    <property type="term" value="F:UDP-N-acetylglucosamine diphosphorylase activity"/>
    <property type="evidence" value="ECO:0007669"/>
    <property type="project" value="UniProtKB-UniRule"/>
</dbReference>
<dbReference type="GO" id="GO:0000902">
    <property type="term" value="P:cell morphogenesis"/>
    <property type="evidence" value="ECO:0007669"/>
    <property type="project" value="UniProtKB-UniRule"/>
</dbReference>
<dbReference type="GO" id="GO:0071555">
    <property type="term" value="P:cell wall organization"/>
    <property type="evidence" value="ECO:0007669"/>
    <property type="project" value="UniProtKB-KW"/>
</dbReference>
<dbReference type="GO" id="GO:0009245">
    <property type="term" value="P:lipid A biosynthetic process"/>
    <property type="evidence" value="ECO:0007669"/>
    <property type="project" value="UniProtKB-UniRule"/>
</dbReference>
<dbReference type="GO" id="GO:0009252">
    <property type="term" value="P:peptidoglycan biosynthetic process"/>
    <property type="evidence" value="ECO:0007669"/>
    <property type="project" value="UniProtKB-UniRule"/>
</dbReference>
<dbReference type="GO" id="GO:0008360">
    <property type="term" value="P:regulation of cell shape"/>
    <property type="evidence" value="ECO:0007669"/>
    <property type="project" value="UniProtKB-KW"/>
</dbReference>
<dbReference type="GO" id="GO:0006048">
    <property type="term" value="P:UDP-N-acetylglucosamine biosynthetic process"/>
    <property type="evidence" value="ECO:0007669"/>
    <property type="project" value="UniProtKB-UniPathway"/>
</dbReference>
<dbReference type="CDD" id="cd02540">
    <property type="entry name" value="GT2_GlmU_N_bac"/>
    <property type="match status" value="1"/>
</dbReference>
<dbReference type="CDD" id="cd03353">
    <property type="entry name" value="LbH_GlmU_C"/>
    <property type="match status" value="1"/>
</dbReference>
<dbReference type="FunFam" id="2.160.10.10:FF:000016">
    <property type="entry name" value="Bifunctional protein GlmU"/>
    <property type="match status" value="1"/>
</dbReference>
<dbReference type="FunFam" id="3.90.550.10:FF:000006">
    <property type="entry name" value="Bifunctional protein GlmU"/>
    <property type="match status" value="1"/>
</dbReference>
<dbReference type="Gene3D" id="2.160.10.10">
    <property type="entry name" value="Hexapeptide repeat proteins"/>
    <property type="match status" value="1"/>
</dbReference>
<dbReference type="Gene3D" id="3.90.550.10">
    <property type="entry name" value="Spore Coat Polysaccharide Biosynthesis Protein SpsA, Chain A"/>
    <property type="match status" value="1"/>
</dbReference>
<dbReference type="HAMAP" id="MF_01631">
    <property type="entry name" value="GlmU"/>
    <property type="match status" value="1"/>
</dbReference>
<dbReference type="InterPro" id="IPR005882">
    <property type="entry name" value="Bifunctional_GlmU"/>
</dbReference>
<dbReference type="InterPro" id="IPR050065">
    <property type="entry name" value="GlmU-like"/>
</dbReference>
<dbReference type="InterPro" id="IPR038009">
    <property type="entry name" value="GlmU_C_LbH"/>
</dbReference>
<dbReference type="InterPro" id="IPR001451">
    <property type="entry name" value="Hexapep"/>
</dbReference>
<dbReference type="InterPro" id="IPR018357">
    <property type="entry name" value="Hexapep_transf_CS"/>
</dbReference>
<dbReference type="InterPro" id="IPR005835">
    <property type="entry name" value="NTP_transferase_dom"/>
</dbReference>
<dbReference type="InterPro" id="IPR029044">
    <property type="entry name" value="Nucleotide-diphossugar_trans"/>
</dbReference>
<dbReference type="InterPro" id="IPR011004">
    <property type="entry name" value="Trimer_LpxA-like_sf"/>
</dbReference>
<dbReference type="NCBIfam" id="TIGR01173">
    <property type="entry name" value="glmU"/>
    <property type="match status" value="1"/>
</dbReference>
<dbReference type="NCBIfam" id="NF010934">
    <property type="entry name" value="PRK14354.1"/>
    <property type="match status" value="1"/>
</dbReference>
<dbReference type="PANTHER" id="PTHR43584:SF3">
    <property type="entry name" value="BIFUNCTIONAL PROTEIN GLMU"/>
    <property type="match status" value="1"/>
</dbReference>
<dbReference type="PANTHER" id="PTHR43584">
    <property type="entry name" value="NUCLEOTIDYL TRANSFERASE"/>
    <property type="match status" value="1"/>
</dbReference>
<dbReference type="Pfam" id="PF00132">
    <property type="entry name" value="Hexapep"/>
    <property type="match status" value="3"/>
</dbReference>
<dbReference type="Pfam" id="PF00483">
    <property type="entry name" value="NTP_transferase"/>
    <property type="match status" value="1"/>
</dbReference>
<dbReference type="SUPFAM" id="SSF53448">
    <property type="entry name" value="Nucleotide-diphospho-sugar transferases"/>
    <property type="match status" value="1"/>
</dbReference>
<dbReference type="SUPFAM" id="SSF51161">
    <property type="entry name" value="Trimeric LpxA-like enzymes"/>
    <property type="match status" value="1"/>
</dbReference>
<dbReference type="PROSITE" id="PS00101">
    <property type="entry name" value="HEXAPEP_TRANSFERASES"/>
    <property type="match status" value="1"/>
</dbReference>
<gene>
    <name evidence="1" type="primary">glmU</name>
    <name type="ordered locus">BAA_0059</name>
</gene>
<name>GLMU_BACAA</name>
<keyword id="KW-0012">Acyltransferase</keyword>
<keyword id="KW-0133">Cell shape</keyword>
<keyword id="KW-0961">Cell wall biogenesis/degradation</keyword>
<keyword id="KW-0963">Cytoplasm</keyword>
<keyword id="KW-0460">Magnesium</keyword>
<keyword id="KW-0479">Metal-binding</keyword>
<keyword id="KW-0511">Multifunctional enzyme</keyword>
<keyword id="KW-0548">Nucleotidyltransferase</keyword>
<keyword id="KW-0573">Peptidoglycan synthesis</keyword>
<keyword id="KW-0677">Repeat</keyword>
<keyword id="KW-0808">Transferase</keyword>